<accession>A0A7H0DN68</accession>
<name>PG096_MONPV</name>
<evidence type="ECO:0000250" key="1">
    <source>
        <dbReference type="UniProtKB" id="P07613"/>
    </source>
</evidence>
<evidence type="ECO:0000255" key="2"/>
<evidence type="ECO:0000305" key="3"/>
<sequence>MEVIADRLDDIVKQNIADEKFVDFVIHGLEHQCPAILRPLIRLFIDILLFVIVIYIFTVRLVSRNYQILLVLVALVITLTIFLLLYTIIVLD</sequence>
<organism>
    <name type="scientific">Monkeypox virus</name>
    <dbReference type="NCBI Taxonomy" id="10244"/>
    <lineage>
        <taxon>Viruses</taxon>
        <taxon>Varidnaviria</taxon>
        <taxon>Bamfordvirae</taxon>
        <taxon>Nucleocytoviricota</taxon>
        <taxon>Pokkesviricetes</taxon>
        <taxon>Chitovirales</taxon>
        <taxon>Poxviridae</taxon>
        <taxon>Chordopoxvirinae</taxon>
        <taxon>Orthopoxvirus</taxon>
    </lineage>
</organism>
<comment type="function">
    <text evidence="1">Early protein involved in virion morphogenesis. Participates in the formation and elongation of crescent-shaped membrane precursors of immature virions in cytoplasmic factories.</text>
</comment>
<comment type="subunit">
    <text evidence="1">Interacts with OPG158.</text>
</comment>
<comment type="subcellular location">
    <subcellularLocation>
        <location evidence="1">Virion membrane</location>
        <topology evidence="1">Multi-pass membrane protein</topology>
    </subcellularLocation>
    <subcellularLocation>
        <location evidence="1">Host cytoplasm</location>
    </subcellularLocation>
    <subcellularLocation>
        <location evidence="1">Host endoplasmic reticulum membrane</location>
    </subcellularLocation>
    <text evidence="1">Localizes in cytoplasmic virus factories.</text>
</comment>
<comment type="similarity">
    <text evidence="3">Belongs to the orthopoxvirus OPG096 family.</text>
</comment>
<feature type="chain" id="PRO_0000457684" description="Protein OPG096">
    <location>
        <begin position="1"/>
        <end position="92"/>
    </location>
</feature>
<feature type="transmembrane region" description="Helical" evidence="2">
    <location>
        <begin position="39"/>
        <end position="59"/>
    </location>
</feature>
<feature type="transmembrane region" description="Helical" evidence="2">
    <location>
        <begin position="67"/>
        <end position="87"/>
    </location>
</feature>
<proteinExistence type="inferred from homology"/>
<organismHost>
    <name type="scientific">Cynomys gunnisoni</name>
    <name type="common">Gunnison's prairie dog</name>
    <name type="synonym">Spermophilus gunnisoni</name>
    <dbReference type="NCBI Taxonomy" id="45479"/>
</organismHost>
<organismHost>
    <name type="scientific">Cynomys leucurus</name>
    <name type="common">White-tailed prairie dog</name>
    <dbReference type="NCBI Taxonomy" id="99825"/>
</organismHost>
<organismHost>
    <name type="scientific">Cynomys ludovicianus</name>
    <name type="common">Black-tailed prairie dog</name>
    <dbReference type="NCBI Taxonomy" id="45480"/>
</organismHost>
<organismHost>
    <name type="scientific">Cynomys mexicanus</name>
    <name type="common">Mexican prairie dog</name>
    <dbReference type="NCBI Taxonomy" id="99826"/>
</organismHost>
<organismHost>
    <name type="scientific">Cynomys parvidens</name>
    <name type="common">Utah prairie dog</name>
    <dbReference type="NCBI Taxonomy" id="99827"/>
</organismHost>
<organismHost>
    <name type="scientific">Gliridae</name>
    <name type="common">dormice</name>
    <dbReference type="NCBI Taxonomy" id="30650"/>
</organismHost>
<organismHost>
    <name type="scientific">Heliosciurus ruwenzorii</name>
    <name type="common">Ruwenzori sun squirrel</name>
    <dbReference type="NCBI Taxonomy" id="226685"/>
</organismHost>
<organismHost>
    <name type="scientific">Homo sapiens</name>
    <name type="common">Human</name>
    <dbReference type="NCBI Taxonomy" id="9606"/>
</organismHost>
<organismHost>
    <name type="scientific">Mus musculus</name>
    <name type="common">Mouse</name>
    <dbReference type="NCBI Taxonomy" id="10090"/>
</organismHost>
<dbReference type="EMBL" id="MT903340">
    <property type="protein sequence ID" value="QNP12951.1"/>
    <property type="molecule type" value="Genomic_DNA"/>
</dbReference>
<dbReference type="RefSeq" id="YP_010377078.1">
    <property type="nucleotide sequence ID" value="NC_063383.1"/>
</dbReference>
<dbReference type="SMR" id="A0A7H0DN68"/>
<dbReference type="GeneID" id="72551491"/>
<dbReference type="Proteomes" id="UP000516359">
    <property type="component" value="Genome"/>
</dbReference>
<dbReference type="GO" id="GO:0044167">
    <property type="term" value="C:host cell endoplasmic reticulum membrane"/>
    <property type="evidence" value="ECO:0007669"/>
    <property type="project" value="UniProtKB-SubCell"/>
</dbReference>
<dbReference type="GO" id="GO:0016020">
    <property type="term" value="C:membrane"/>
    <property type="evidence" value="ECO:0007669"/>
    <property type="project" value="UniProtKB-KW"/>
</dbReference>
<dbReference type="GO" id="GO:0055036">
    <property type="term" value="C:virion membrane"/>
    <property type="evidence" value="ECO:0007669"/>
    <property type="project" value="UniProtKB-SubCell"/>
</dbReference>
<dbReference type="InterPro" id="IPR008447">
    <property type="entry name" value="Prot_L2"/>
</dbReference>
<dbReference type="Pfam" id="PF05803">
    <property type="entry name" value="Chordopox_L2"/>
    <property type="match status" value="1"/>
</dbReference>
<reference key="1">
    <citation type="journal article" date="2022" name="J. Infect. Dis.">
        <title>Exportation of Monkeypox virus from the African continent.</title>
        <authorList>
            <person name="Mauldin M.R."/>
            <person name="McCollum A.M."/>
            <person name="Nakazawa Y.J."/>
            <person name="Mandra A."/>
            <person name="Whitehouse E.R."/>
            <person name="Davidson W."/>
            <person name="Zhao H."/>
            <person name="Gao J."/>
            <person name="Li Y."/>
            <person name="Doty J."/>
            <person name="Yinka-Ogunleye A."/>
            <person name="Akinpelu A."/>
            <person name="Aruna O."/>
            <person name="Naidoo D."/>
            <person name="Lewandowski K."/>
            <person name="Afrough B."/>
            <person name="Graham V."/>
            <person name="Aarons E."/>
            <person name="Hewson R."/>
            <person name="Vipond R."/>
            <person name="Dunning J."/>
            <person name="Chand M."/>
            <person name="Brown C."/>
            <person name="Cohen-Gihon I."/>
            <person name="Erez N."/>
            <person name="Shifman O."/>
            <person name="Israeli O."/>
            <person name="Sharon M."/>
            <person name="Schwartz E."/>
            <person name="Beth-Din A."/>
            <person name="Zvi A."/>
            <person name="Mak T.M."/>
            <person name="Ng Y.K."/>
            <person name="Cui L."/>
            <person name="Lin R.T.P."/>
            <person name="Olson V.A."/>
            <person name="Brooks T."/>
            <person name="Paran N."/>
            <person name="Ihekweazu C."/>
            <person name="Reynolds M.G."/>
        </authorList>
    </citation>
    <scope>NUCLEOTIDE SEQUENCE [LARGE SCALE GENOMIC DNA]</scope>
    <source>
        <strain>MPXV-M5312_HM12_Rivers</strain>
    </source>
</reference>
<gene>
    <name type="primary">OPG096</name>
    <name type="ORF">MPXVgp081</name>
</gene>
<keyword id="KW-0244">Early protein</keyword>
<keyword id="KW-1035">Host cytoplasm</keyword>
<keyword id="KW-1038">Host endoplasmic reticulum</keyword>
<keyword id="KW-1043">Host membrane</keyword>
<keyword id="KW-0472">Membrane</keyword>
<keyword id="KW-1185">Reference proteome</keyword>
<keyword id="KW-0812">Transmembrane</keyword>
<keyword id="KW-1133">Transmembrane helix</keyword>
<keyword id="KW-0946">Virion</keyword>
<protein>
    <recommendedName>
        <fullName>Protein OPG096</fullName>
    </recommendedName>
    <alternativeName>
        <fullName>Protein L2</fullName>
    </alternativeName>
</protein>